<accession>B5XJM4</accession>
<proteinExistence type="inferred from homology"/>
<keyword id="KW-0963">Cytoplasm</keyword>
<keyword id="KW-0444">Lipid biosynthesis</keyword>
<keyword id="KW-0443">Lipid metabolism</keyword>
<keyword id="KW-0520">NAD</keyword>
<keyword id="KW-0521">NADP</keyword>
<keyword id="KW-0547">Nucleotide-binding</keyword>
<keyword id="KW-0560">Oxidoreductase</keyword>
<keyword id="KW-0594">Phospholipid biosynthesis</keyword>
<keyword id="KW-1208">Phospholipid metabolism</keyword>
<feature type="chain" id="PRO_1000123198" description="Glycerol-3-phosphate dehydrogenase [NAD(P)+]">
    <location>
        <begin position="1"/>
        <end position="338"/>
    </location>
</feature>
<feature type="active site" description="Proton acceptor" evidence="1">
    <location>
        <position position="194"/>
    </location>
</feature>
<feature type="binding site" evidence="1">
    <location>
        <position position="13"/>
    </location>
    <ligand>
        <name>NADPH</name>
        <dbReference type="ChEBI" id="CHEBI:57783"/>
    </ligand>
</feature>
<feature type="binding site" evidence="1">
    <location>
        <position position="14"/>
    </location>
    <ligand>
        <name>NADPH</name>
        <dbReference type="ChEBI" id="CHEBI:57783"/>
    </ligand>
</feature>
<feature type="binding site" evidence="1">
    <location>
        <position position="108"/>
    </location>
    <ligand>
        <name>NADPH</name>
        <dbReference type="ChEBI" id="CHEBI:57783"/>
    </ligand>
</feature>
<feature type="binding site" evidence="1">
    <location>
        <position position="108"/>
    </location>
    <ligand>
        <name>sn-glycerol 3-phosphate</name>
        <dbReference type="ChEBI" id="CHEBI:57597"/>
    </ligand>
</feature>
<feature type="binding site" evidence="1">
    <location>
        <position position="139"/>
    </location>
    <ligand>
        <name>sn-glycerol 3-phosphate</name>
        <dbReference type="ChEBI" id="CHEBI:57597"/>
    </ligand>
</feature>
<feature type="binding site" evidence="1">
    <location>
        <position position="141"/>
    </location>
    <ligand>
        <name>sn-glycerol 3-phosphate</name>
        <dbReference type="ChEBI" id="CHEBI:57597"/>
    </ligand>
</feature>
<feature type="binding site" evidence="1">
    <location>
        <position position="143"/>
    </location>
    <ligand>
        <name>NADPH</name>
        <dbReference type="ChEBI" id="CHEBI:57783"/>
    </ligand>
</feature>
<feature type="binding site" evidence="1">
    <location>
        <position position="194"/>
    </location>
    <ligand>
        <name>sn-glycerol 3-phosphate</name>
        <dbReference type="ChEBI" id="CHEBI:57597"/>
    </ligand>
</feature>
<feature type="binding site" evidence="1">
    <location>
        <position position="247"/>
    </location>
    <ligand>
        <name>sn-glycerol 3-phosphate</name>
        <dbReference type="ChEBI" id="CHEBI:57597"/>
    </ligand>
</feature>
<feature type="binding site" evidence="1">
    <location>
        <position position="257"/>
    </location>
    <ligand>
        <name>sn-glycerol 3-phosphate</name>
        <dbReference type="ChEBI" id="CHEBI:57597"/>
    </ligand>
</feature>
<feature type="binding site" evidence="1">
    <location>
        <position position="258"/>
    </location>
    <ligand>
        <name>NADPH</name>
        <dbReference type="ChEBI" id="CHEBI:57783"/>
    </ligand>
</feature>
<feature type="binding site" evidence="1">
    <location>
        <position position="258"/>
    </location>
    <ligand>
        <name>sn-glycerol 3-phosphate</name>
        <dbReference type="ChEBI" id="CHEBI:57597"/>
    </ligand>
</feature>
<feature type="binding site" evidence="1">
    <location>
        <position position="259"/>
    </location>
    <ligand>
        <name>sn-glycerol 3-phosphate</name>
        <dbReference type="ChEBI" id="CHEBI:57597"/>
    </ligand>
</feature>
<feature type="binding site" evidence="1">
    <location>
        <position position="282"/>
    </location>
    <ligand>
        <name>NADPH</name>
        <dbReference type="ChEBI" id="CHEBI:57783"/>
    </ligand>
</feature>
<feature type="binding site" evidence="1">
    <location>
        <position position="284"/>
    </location>
    <ligand>
        <name>NADPH</name>
        <dbReference type="ChEBI" id="CHEBI:57783"/>
    </ligand>
</feature>
<reference key="1">
    <citation type="journal article" date="2008" name="J. Bacteriol.">
        <title>Genome sequence of a nephritogenic and highly transformable M49 strain of Streptococcus pyogenes.</title>
        <authorList>
            <person name="McShan W.M."/>
            <person name="Ferretti J.J."/>
            <person name="Karasawa T."/>
            <person name="Suvorov A.N."/>
            <person name="Lin S."/>
            <person name="Qin B."/>
            <person name="Jia H."/>
            <person name="Kenton S."/>
            <person name="Najar F."/>
            <person name="Wu H."/>
            <person name="Scott J."/>
            <person name="Roe B.A."/>
            <person name="Savic D.J."/>
        </authorList>
    </citation>
    <scope>NUCLEOTIDE SEQUENCE [LARGE SCALE GENOMIC DNA]</scope>
    <source>
        <strain>NZ131</strain>
    </source>
</reference>
<comment type="function">
    <text evidence="1">Catalyzes the reduction of the glycolytic intermediate dihydroxyacetone phosphate (DHAP) to sn-glycerol 3-phosphate (G3P), the key precursor for phospholipid synthesis.</text>
</comment>
<comment type="catalytic activity">
    <reaction evidence="1">
        <text>sn-glycerol 3-phosphate + NAD(+) = dihydroxyacetone phosphate + NADH + H(+)</text>
        <dbReference type="Rhea" id="RHEA:11092"/>
        <dbReference type="ChEBI" id="CHEBI:15378"/>
        <dbReference type="ChEBI" id="CHEBI:57540"/>
        <dbReference type="ChEBI" id="CHEBI:57597"/>
        <dbReference type="ChEBI" id="CHEBI:57642"/>
        <dbReference type="ChEBI" id="CHEBI:57945"/>
        <dbReference type="EC" id="1.1.1.94"/>
    </reaction>
    <physiologicalReaction direction="right-to-left" evidence="1">
        <dbReference type="Rhea" id="RHEA:11094"/>
    </physiologicalReaction>
</comment>
<comment type="catalytic activity">
    <reaction evidence="1">
        <text>sn-glycerol 3-phosphate + NADP(+) = dihydroxyacetone phosphate + NADPH + H(+)</text>
        <dbReference type="Rhea" id="RHEA:11096"/>
        <dbReference type="ChEBI" id="CHEBI:15378"/>
        <dbReference type="ChEBI" id="CHEBI:57597"/>
        <dbReference type="ChEBI" id="CHEBI:57642"/>
        <dbReference type="ChEBI" id="CHEBI:57783"/>
        <dbReference type="ChEBI" id="CHEBI:58349"/>
        <dbReference type="EC" id="1.1.1.94"/>
    </reaction>
    <physiologicalReaction direction="right-to-left" evidence="1">
        <dbReference type="Rhea" id="RHEA:11098"/>
    </physiologicalReaction>
</comment>
<comment type="pathway">
    <text evidence="1">Membrane lipid metabolism; glycerophospholipid metabolism.</text>
</comment>
<comment type="subcellular location">
    <subcellularLocation>
        <location evidence="1">Cytoplasm</location>
    </subcellularLocation>
</comment>
<comment type="similarity">
    <text evidence="1">Belongs to the NAD-dependent glycerol-3-phosphate dehydrogenase family.</text>
</comment>
<dbReference type="EC" id="1.1.1.94" evidence="1"/>
<dbReference type="EMBL" id="CP000829">
    <property type="protein sequence ID" value="ACI60536.1"/>
    <property type="molecule type" value="Genomic_DNA"/>
</dbReference>
<dbReference type="SMR" id="B5XJM4"/>
<dbReference type="KEGG" id="soz:Spy49_0192c"/>
<dbReference type="HOGENOM" id="CLU_033449_0_2_9"/>
<dbReference type="UniPathway" id="UPA00940"/>
<dbReference type="Proteomes" id="UP000001039">
    <property type="component" value="Chromosome"/>
</dbReference>
<dbReference type="GO" id="GO:0005829">
    <property type="term" value="C:cytosol"/>
    <property type="evidence" value="ECO:0007669"/>
    <property type="project" value="TreeGrafter"/>
</dbReference>
<dbReference type="GO" id="GO:0047952">
    <property type="term" value="F:glycerol-3-phosphate dehydrogenase [NAD(P)+] activity"/>
    <property type="evidence" value="ECO:0007669"/>
    <property type="project" value="UniProtKB-UniRule"/>
</dbReference>
<dbReference type="GO" id="GO:0051287">
    <property type="term" value="F:NAD binding"/>
    <property type="evidence" value="ECO:0007669"/>
    <property type="project" value="InterPro"/>
</dbReference>
<dbReference type="GO" id="GO:0005975">
    <property type="term" value="P:carbohydrate metabolic process"/>
    <property type="evidence" value="ECO:0007669"/>
    <property type="project" value="InterPro"/>
</dbReference>
<dbReference type="GO" id="GO:0046167">
    <property type="term" value="P:glycerol-3-phosphate biosynthetic process"/>
    <property type="evidence" value="ECO:0007669"/>
    <property type="project" value="UniProtKB-UniRule"/>
</dbReference>
<dbReference type="GO" id="GO:0046168">
    <property type="term" value="P:glycerol-3-phosphate catabolic process"/>
    <property type="evidence" value="ECO:0007669"/>
    <property type="project" value="InterPro"/>
</dbReference>
<dbReference type="GO" id="GO:0006650">
    <property type="term" value="P:glycerophospholipid metabolic process"/>
    <property type="evidence" value="ECO:0007669"/>
    <property type="project" value="UniProtKB-UniRule"/>
</dbReference>
<dbReference type="GO" id="GO:0008654">
    <property type="term" value="P:phospholipid biosynthetic process"/>
    <property type="evidence" value="ECO:0007669"/>
    <property type="project" value="UniProtKB-KW"/>
</dbReference>
<dbReference type="FunFam" id="1.10.1040.10:FF:000001">
    <property type="entry name" value="Glycerol-3-phosphate dehydrogenase [NAD(P)+]"/>
    <property type="match status" value="1"/>
</dbReference>
<dbReference type="FunFam" id="3.40.50.720:FF:000019">
    <property type="entry name" value="Glycerol-3-phosphate dehydrogenase [NAD(P)+]"/>
    <property type="match status" value="1"/>
</dbReference>
<dbReference type="Gene3D" id="1.10.1040.10">
    <property type="entry name" value="N-(1-d-carboxylethyl)-l-norvaline Dehydrogenase, domain 2"/>
    <property type="match status" value="1"/>
</dbReference>
<dbReference type="Gene3D" id="3.40.50.720">
    <property type="entry name" value="NAD(P)-binding Rossmann-like Domain"/>
    <property type="match status" value="1"/>
</dbReference>
<dbReference type="HAMAP" id="MF_00394">
    <property type="entry name" value="NAD_Glyc3P_dehydrog"/>
    <property type="match status" value="1"/>
</dbReference>
<dbReference type="InterPro" id="IPR008927">
    <property type="entry name" value="6-PGluconate_DH-like_C_sf"/>
</dbReference>
<dbReference type="InterPro" id="IPR013328">
    <property type="entry name" value="6PGD_dom2"/>
</dbReference>
<dbReference type="InterPro" id="IPR006168">
    <property type="entry name" value="G3P_DH_NAD-dep"/>
</dbReference>
<dbReference type="InterPro" id="IPR006109">
    <property type="entry name" value="G3P_DH_NAD-dep_C"/>
</dbReference>
<dbReference type="InterPro" id="IPR011128">
    <property type="entry name" value="G3P_DH_NAD-dep_N"/>
</dbReference>
<dbReference type="InterPro" id="IPR036291">
    <property type="entry name" value="NAD(P)-bd_dom_sf"/>
</dbReference>
<dbReference type="NCBIfam" id="NF000940">
    <property type="entry name" value="PRK00094.1-2"/>
    <property type="match status" value="1"/>
</dbReference>
<dbReference type="NCBIfam" id="NF000941">
    <property type="entry name" value="PRK00094.1-3"/>
    <property type="match status" value="1"/>
</dbReference>
<dbReference type="NCBIfam" id="NF000942">
    <property type="entry name" value="PRK00094.1-4"/>
    <property type="match status" value="1"/>
</dbReference>
<dbReference type="PANTHER" id="PTHR11728">
    <property type="entry name" value="GLYCEROL-3-PHOSPHATE DEHYDROGENASE"/>
    <property type="match status" value="1"/>
</dbReference>
<dbReference type="PANTHER" id="PTHR11728:SF1">
    <property type="entry name" value="GLYCEROL-3-PHOSPHATE DEHYDROGENASE [NAD(+)] 2, CHLOROPLASTIC"/>
    <property type="match status" value="1"/>
</dbReference>
<dbReference type="Pfam" id="PF07479">
    <property type="entry name" value="NAD_Gly3P_dh_C"/>
    <property type="match status" value="1"/>
</dbReference>
<dbReference type="Pfam" id="PF01210">
    <property type="entry name" value="NAD_Gly3P_dh_N"/>
    <property type="match status" value="1"/>
</dbReference>
<dbReference type="PIRSF" id="PIRSF000114">
    <property type="entry name" value="Glycerol-3-P_dh"/>
    <property type="match status" value="1"/>
</dbReference>
<dbReference type="PRINTS" id="PR00077">
    <property type="entry name" value="GPDHDRGNASE"/>
</dbReference>
<dbReference type="SUPFAM" id="SSF48179">
    <property type="entry name" value="6-phosphogluconate dehydrogenase C-terminal domain-like"/>
    <property type="match status" value="1"/>
</dbReference>
<dbReference type="SUPFAM" id="SSF51735">
    <property type="entry name" value="NAD(P)-binding Rossmann-fold domains"/>
    <property type="match status" value="1"/>
</dbReference>
<dbReference type="PROSITE" id="PS00957">
    <property type="entry name" value="NAD_G3PDH"/>
    <property type="match status" value="1"/>
</dbReference>
<gene>
    <name evidence="1" type="primary">gpsA</name>
    <name type="ordered locus">Spy49_0192c</name>
</gene>
<sequence>MTKQKVAILGPGSWGTALSQVLNDNGHDVRLWGNIPDQIEEINTKHTNRHYFKDIVLDKNITATLDLGQALSDVDAVLFVVPTKVTRLVARQVAAILDHKVVVMHASKGLEPETHERLSTILEEEIPAHFRSEVVVVSGPSHAEETIVRDITLITAASKDIEAAKYVQSLFSNHYFRLYTNTDVIGVETAGALKNIIAVGAGALHGLGYGDNAKAAVITRGLAEITRLGVKLGADPLTYSGLSGVGDLIVTGTSVHSRNWRAGAALGRGEKLEDIERNMGMVIEGIATTKVAYEIAQDLGVYMPITTAIYKSIYEGADIKESILGMMSNEFRSENEWH</sequence>
<protein>
    <recommendedName>
        <fullName evidence="1">Glycerol-3-phosphate dehydrogenase [NAD(P)+]</fullName>
        <ecNumber evidence="1">1.1.1.94</ecNumber>
    </recommendedName>
    <alternativeName>
        <fullName evidence="1">NAD(P)(+)-dependent glycerol-3-phosphate dehydrogenase</fullName>
    </alternativeName>
    <alternativeName>
        <fullName evidence="1">NAD(P)H-dependent dihydroxyacetone-phosphate reductase</fullName>
    </alternativeName>
</protein>
<name>GPDA_STRPZ</name>
<organism>
    <name type="scientific">Streptococcus pyogenes serotype M49 (strain NZ131)</name>
    <dbReference type="NCBI Taxonomy" id="471876"/>
    <lineage>
        <taxon>Bacteria</taxon>
        <taxon>Bacillati</taxon>
        <taxon>Bacillota</taxon>
        <taxon>Bacilli</taxon>
        <taxon>Lactobacillales</taxon>
        <taxon>Streptococcaceae</taxon>
        <taxon>Streptococcus</taxon>
    </lineage>
</organism>
<evidence type="ECO:0000255" key="1">
    <source>
        <dbReference type="HAMAP-Rule" id="MF_00394"/>
    </source>
</evidence>